<organism>
    <name type="scientific">Haemophilus influenzae (strain 86-028NP)</name>
    <dbReference type="NCBI Taxonomy" id="281310"/>
    <lineage>
        <taxon>Bacteria</taxon>
        <taxon>Pseudomonadati</taxon>
        <taxon>Pseudomonadota</taxon>
        <taxon>Gammaproteobacteria</taxon>
        <taxon>Pasteurellales</taxon>
        <taxon>Pasteurellaceae</taxon>
        <taxon>Haemophilus</taxon>
    </lineage>
</organism>
<comment type="function">
    <text evidence="1">Part of the Tol-Pal system, which plays a role in outer membrane invagination during cell division and is important for maintaining outer membrane integrity.</text>
</comment>
<comment type="subunit">
    <text evidence="1">The Tol-Pal system is composed of five core proteins: the inner membrane proteins TolA, TolQ and TolR, the periplasmic protein TolB and the outer membrane protein Pal. They form a network linking the inner and outer membranes and the peptidoglycan layer.</text>
</comment>
<comment type="subcellular location">
    <subcellularLocation>
        <location evidence="1">Periplasm</location>
    </subcellularLocation>
</comment>
<comment type="similarity">
    <text evidence="1">Belongs to the TolB family.</text>
</comment>
<sequence>MKLLKRLVSVFAIVLAVGSNAFAGDEVRIVIDEGVDGARPIAVVPFVGSAPEDISKIVADDLRNSGKFNPIAVSQMPQRPTSAAEVNPEAWSNIGIDAIVIGQVVPSGNGYSITYQLIDTVGASGTPGAVLMQNSYTVTNKWLRYGAHTVSDEVFEKLTAIRGAFRTRIAYVVQKNGGSQPYEVRVADYDGYNQFIVNRSAQPIMSPAWSPDGQRLAYVSFENKKSQLVVQDLNSGARKVVASFQGHNGAPAFSPDGSRLAFASSRDGVLNIYVMGANGGTPTQLTSGAGNNTEPAWSPDGNSILFTSDRSGSPQVYRMDASGGSATAVGGRGSAQISADGKTLVMINGNNNVVKQDLTTGVSEVLSTSFLGESPSLSPNGIMIIYSSTQGLGKVLQLVSADGRFKASLPGSDGQVKFPAWSPYLTK</sequence>
<feature type="signal peptide" evidence="1">
    <location>
        <begin position="1"/>
        <end position="23"/>
    </location>
</feature>
<feature type="chain" id="PRO_0000259051" description="Tol-Pal system protein TolB" evidence="1">
    <location>
        <begin position="24"/>
        <end position="427"/>
    </location>
</feature>
<protein>
    <recommendedName>
        <fullName evidence="1">Tol-Pal system protein TolB</fullName>
    </recommendedName>
</protein>
<reference key="1">
    <citation type="journal article" date="2005" name="J. Bacteriol.">
        <title>Genomic sequence of an otitis media isolate of nontypeable Haemophilus influenzae: comparative study with H. influenzae serotype d, strain KW20.</title>
        <authorList>
            <person name="Harrison A."/>
            <person name="Dyer D.W."/>
            <person name="Gillaspy A."/>
            <person name="Ray W.C."/>
            <person name="Mungur R."/>
            <person name="Carson M.B."/>
            <person name="Zhong H."/>
            <person name="Gipson J."/>
            <person name="Gipson M."/>
            <person name="Johnson L.S."/>
            <person name="Lewis L."/>
            <person name="Bakaletz L.O."/>
            <person name="Munson R.S. Jr."/>
        </authorList>
    </citation>
    <scope>NUCLEOTIDE SEQUENCE [LARGE SCALE GENOMIC DNA]</scope>
    <source>
        <strain>86-028NP</strain>
    </source>
</reference>
<gene>
    <name evidence="1" type="primary">tolB</name>
    <name type="ordered locus">NTHI0502</name>
</gene>
<proteinExistence type="inferred from homology"/>
<dbReference type="EMBL" id="CP000057">
    <property type="protein sequence ID" value="AAX87437.1"/>
    <property type="molecule type" value="Genomic_DNA"/>
</dbReference>
<dbReference type="RefSeq" id="WP_011272014.1">
    <property type="nucleotide sequence ID" value="NC_007146.2"/>
</dbReference>
<dbReference type="SMR" id="Q4QNG0"/>
<dbReference type="GeneID" id="93219397"/>
<dbReference type="KEGG" id="hit:NTHI0502"/>
<dbReference type="HOGENOM" id="CLU_047123_0_0_6"/>
<dbReference type="Proteomes" id="UP000002525">
    <property type="component" value="Chromosome"/>
</dbReference>
<dbReference type="GO" id="GO:0042597">
    <property type="term" value="C:periplasmic space"/>
    <property type="evidence" value="ECO:0007669"/>
    <property type="project" value="UniProtKB-SubCell"/>
</dbReference>
<dbReference type="GO" id="GO:0051301">
    <property type="term" value="P:cell division"/>
    <property type="evidence" value="ECO:0007669"/>
    <property type="project" value="UniProtKB-UniRule"/>
</dbReference>
<dbReference type="GO" id="GO:0017038">
    <property type="term" value="P:protein import"/>
    <property type="evidence" value="ECO:0007669"/>
    <property type="project" value="InterPro"/>
</dbReference>
<dbReference type="Gene3D" id="2.120.10.30">
    <property type="entry name" value="TolB, C-terminal domain"/>
    <property type="match status" value="1"/>
</dbReference>
<dbReference type="Gene3D" id="3.40.50.10070">
    <property type="entry name" value="TolB, N-terminal domain"/>
    <property type="match status" value="1"/>
</dbReference>
<dbReference type="HAMAP" id="MF_00671">
    <property type="entry name" value="TolB"/>
    <property type="match status" value="1"/>
</dbReference>
<dbReference type="InterPro" id="IPR011042">
    <property type="entry name" value="6-blade_b-propeller_TolB-like"/>
</dbReference>
<dbReference type="InterPro" id="IPR011659">
    <property type="entry name" value="PD40"/>
</dbReference>
<dbReference type="InterPro" id="IPR014167">
    <property type="entry name" value="Tol-Pal_TolB"/>
</dbReference>
<dbReference type="InterPro" id="IPR007195">
    <property type="entry name" value="TolB_N"/>
</dbReference>
<dbReference type="NCBIfam" id="TIGR02800">
    <property type="entry name" value="propeller_TolB"/>
    <property type="match status" value="1"/>
</dbReference>
<dbReference type="PANTHER" id="PTHR36842:SF1">
    <property type="entry name" value="PROTEIN TOLB"/>
    <property type="match status" value="1"/>
</dbReference>
<dbReference type="PANTHER" id="PTHR36842">
    <property type="entry name" value="PROTEIN TOLB HOMOLOG"/>
    <property type="match status" value="1"/>
</dbReference>
<dbReference type="Pfam" id="PF07676">
    <property type="entry name" value="PD40"/>
    <property type="match status" value="4"/>
</dbReference>
<dbReference type="Pfam" id="PF04052">
    <property type="entry name" value="TolB_N"/>
    <property type="match status" value="1"/>
</dbReference>
<dbReference type="SUPFAM" id="SSF52964">
    <property type="entry name" value="TolB, N-terminal domain"/>
    <property type="match status" value="1"/>
</dbReference>
<dbReference type="SUPFAM" id="SSF69304">
    <property type="entry name" value="Tricorn protease N-terminal domain"/>
    <property type="match status" value="1"/>
</dbReference>
<name>TOLB_HAEI8</name>
<accession>Q4QNG0</accession>
<keyword id="KW-0131">Cell cycle</keyword>
<keyword id="KW-0132">Cell division</keyword>
<keyword id="KW-0574">Periplasm</keyword>
<keyword id="KW-0732">Signal</keyword>
<evidence type="ECO:0000255" key="1">
    <source>
        <dbReference type="HAMAP-Rule" id="MF_00671"/>
    </source>
</evidence>